<organism>
    <name type="scientific">Amoebophilus asiaticus (strain 5a2)</name>
    <dbReference type="NCBI Taxonomy" id="452471"/>
    <lineage>
        <taxon>Bacteria</taxon>
        <taxon>Pseudomonadati</taxon>
        <taxon>Bacteroidota</taxon>
        <taxon>Cytophagia</taxon>
        <taxon>Cytophagales</taxon>
        <taxon>Amoebophilaceae</taxon>
        <taxon>Candidatus Amoebophilus</taxon>
    </lineage>
</organism>
<accession>B3ERZ2</accession>
<sequence>MNKNCVEVGKITQARGLKGCVVARIEPILESFDPINYIFIKIGHTLVPYQVEEITGQAQQVFIKFQHISDRDSVRELIGSSIWLSQEILDKLVVQEEPYIDIIGYQVTDKYQGELGIIKDIEQFPLHVCLVVDYLDKELLIPYEPALIQDLDHEQKKIIVELPMGFLEAMGCK</sequence>
<proteinExistence type="inferred from homology"/>
<evidence type="ECO:0000255" key="1">
    <source>
        <dbReference type="HAMAP-Rule" id="MF_00014"/>
    </source>
</evidence>
<protein>
    <recommendedName>
        <fullName evidence="1">Ribosome maturation factor RimM</fullName>
    </recommendedName>
</protein>
<gene>
    <name evidence="1" type="primary">rimM</name>
    <name type="ordered locus">Aasi_0593</name>
</gene>
<dbReference type="EMBL" id="CP001102">
    <property type="protein sequence ID" value="ACE05994.1"/>
    <property type="molecule type" value="Genomic_DNA"/>
</dbReference>
<dbReference type="RefSeq" id="WP_012472760.1">
    <property type="nucleotide sequence ID" value="NC_010830.1"/>
</dbReference>
<dbReference type="SMR" id="B3ERZ2"/>
<dbReference type="STRING" id="452471.Aasi_0593"/>
<dbReference type="KEGG" id="aas:Aasi_0593"/>
<dbReference type="eggNOG" id="COG0806">
    <property type="taxonomic scope" value="Bacteria"/>
</dbReference>
<dbReference type="HOGENOM" id="CLU_077636_4_1_10"/>
<dbReference type="OrthoDB" id="9810331at2"/>
<dbReference type="Proteomes" id="UP000001227">
    <property type="component" value="Chromosome"/>
</dbReference>
<dbReference type="GO" id="GO:0005737">
    <property type="term" value="C:cytoplasm"/>
    <property type="evidence" value="ECO:0007669"/>
    <property type="project" value="UniProtKB-SubCell"/>
</dbReference>
<dbReference type="GO" id="GO:0005840">
    <property type="term" value="C:ribosome"/>
    <property type="evidence" value="ECO:0007669"/>
    <property type="project" value="InterPro"/>
</dbReference>
<dbReference type="GO" id="GO:0043022">
    <property type="term" value="F:ribosome binding"/>
    <property type="evidence" value="ECO:0007669"/>
    <property type="project" value="InterPro"/>
</dbReference>
<dbReference type="GO" id="GO:0042274">
    <property type="term" value="P:ribosomal small subunit biogenesis"/>
    <property type="evidence" value="ECO:0007669"/>
    <property type="project" value="UniProtKB-UniRule"/>
</dbReference>
<dbReference type="GO" id="GO:0006364">
    <property type="term" value="P:rRNA processing"/>
    <property type="evidence" value="ECO:0007669"/>
    <property type="project" value="UniProtKB-UniRule"/>
</dbReference>
<dbReference type="Gene3D" id="2.30.30.240">
    <property type="entry name" value="PRC-barrel domain"/>
    <property type="match status" value="1"/>
</dbReference>
<dbReference type="Gene3D" id="2.40.30.60">
    <property type="entry name" value="RimM"/>
    <property type="match status" value="1"/>
</dbReference>
<dbReference type="HAMAP" id="MF_00014">
    <property type="entry name" value="Ribosome_mat_RimM"/>
    <property type="match status" value="1"/>
</dbReference>
<dbReference type="InterPro" id="IPR011033">
    <property type="entry name" value="PRC_barrel-like_sf"/>
</dbReference>
<dbReference type="InterPro" id="IPR056792">
    <property type="entry name" value="PRC_RimM"/>
</dbReference>
<dbReference type="InterPro" id="IPR011961">
    <property type="entry name" value="RimM"/>
</dbReference>
<dbReference type="InterPro" id="IPR002676">
    <property type="entry name" value="RimM_N"/>
</dbReference>
<dbReference type="InterPro" id="IPR036976">
    <property type="entry name" value="RimM_N_sf"/>
</dbReference>
<dbReference type="InterPro" id="IPR009000">
    <property type="entry name" value="Transl_B-barrel_sf"/>
</dbReference>
<dbReference type="NCBIfam" id="TIGR02273">
    <property type="entry name" value="16S_RimM"/>
    <property type="match status" value="1"/>
</dbReference>
<dbReference type="PANTHER" id="PTHR33692">
    <property type="entry name" value="RIBOSOME MATURATION FACTOR RIMM"/>
    <property type="match status" value="1"/>
</dbReference>
<dbReference type="PANTHER" id="PTHR33692:SF1">
    <property type="entry name" value="RIBOSOME MATURATION FACTOR RIMM"/>
    <property type="match status" value="1"/>
</dbReference>
<dbReference type="Pfam" id="PF24986">
    <property type="entry name" value="PRC_RimM"/>
    <property type="match status" value="1"/>
</dbReference>
<dbReference type="Pfam" id="PF01782">
    <property type="entry name" value="RimM"/>
    <property type="match status" value="1"/>
</dbReference>
<dbReference type="SUPFAM" id="SSF50346">
    <property type="entry name" value="PRC-barrel domain"/>
    <property type="match status" value="1"/>
</dbReference>
<dbReference type="SUPFAM" id="SSF50447">
    <property type="entry name" value="Translation proteins"/>
    <property type="match status" value="1"/>
</dbReference>
<name>RIMM_AMOA5</name>
<keyword id="KW-0143">Chaperone</keyword>
<keyword id="KW-0963">Cytoplasm</keyword>
<keyword id="KW-1185">Reference proteome</keyword>
<keyword id="KW-0690">Ribosome biogenesis</keyword>
<keyword id="KW-0698">rRNA processing</keyword>
<comment type="function">
    <text evidence="1">An accessory protein needed during the final step in the assembly of 30S ribosomal subunit, possibly for assembly of the head region. Essential for efficient processing of 16S rRNA. May be needed both before and after RbfA during the maturation of 16S rRNA. It has affinity for free ribosomal 30S subunits but not for 70S ribosomes.</text>
</comment>
<comment type="subunit">
    <text evidence="1">Binds ribosomal protein uS19.</text>
</comment>
<comment type="subcellular location">
    <subcellularLocation>
        <location evidence="1">Cytoplasm</location>
    </subcellularLocation>
</comment>
<comment type="domain">
    <text evidence="1">The PRC barrel domain binds ribosomal protein uS19.</text>
</comment>
<comment type="similarity">
    <text evidence="1">Belongs to the RimM family.</text>
</comment>
<reference key="1">
    <citation type="journal article" date="2010" name="J. Bacteriol.">
        <title>The genome of the amoeba symbiont 'Candidatus Amoebophilus asiaticus' reveals common mechanisms for host cell interaction among amoeba-associated bacteria.</title>
        <authorList>
            <person name="Schmitz-Esser S."/>
            <person name="Tischler P."/>
            <person name="Arnold R."/>
            <person name="Montanaro J."/>
            <person name="Wagner M."/>
            <person name="Rattei T."/>
            <person name="Horn M."/>
        </authorList>
    </citation>
    <scope>NUCLEOTIDE SEQUENCE [LARGE SCALE GENOMIC DNA]</scope>
    <source>
        <strain>5a2</strain>
    </source>
</reference>
<feature type="chain" id="PRO_0000351717" description="Ribosome maturation factor RimM">
    <location>
        <begin position="1"/>
        <end position="173"/>
    </location>
</feature>
<feature type="domain" description="PRC barrel" evidence="1">
    <location>
        <begin position="94"/>
        <end position="166"/>
    </location>
</feature>